<comment type="function">
    <text evidence="1">Together with its co-chaperonin GroES, plays an essential role in assisting protein folding. The GroEL-GroES system forms a nano-cage that allows encapsulation of the non-native substrate proteins and provides a physical environment optimized to promote and accelerate protein folding.</text>
</comment>
<comment type="catalytic activity">
    <reaction evidence="1">
        <text>ATP + H2O + a folded polypeptide = ADP + phosphate + an unfolded polypeptide.</text>
        <dbReference type="EC" id="5.6.1.7"/>
    </reaction>
</comment>
<comment type="subunit">
    <text evidence="1">Forms a cylinder of 14 subunits composed of two heptameric rings stacked back-to-back. Interacts with the co-chaperonin GroES.</text>
</comment>
<comment type="subcellular location">
    <subcellularLocation>
        <location evidence="1">Cytoplasm</location>
    </subcellularLocation>
</comment>
<comment type="similarity">
    <text evidence="1">Belongs to the chaperonin (HSP60) family.</text>
</comment>
<dbReference type="EC" id="5.6.1.7" evidence="1"/>
<dbReference type="EMBL" id="CP000121">
    <property type="protein sequence ID" value="ABA25232.1"/>
    <property type="molecule type" value="Genomic_DNA"/>
</dbReference>
<dbReference type="SMR" id="Q3M1B1"/>
<dbReference type="KEGG" id="ava:Ava_C0144"/>
<dbReference type="eggNOG" id="COG0459">
    <property type="taxonomic scope" value="Bacteria"/>
</dbReference>
<dbReference type="HOGENOM" id="CLU_016503_3_0_3"/>
<dbReference type="Proteomes" id="UP000002533">
    <property type="component" value="Plasmid pAnaC"/>
</dbReference>
<dbReference type="GO" id="GO:0005737">
    <property type="term" value="C:cytoplasm"/>
    <property type="evidence" value="ECO:0007669"/>
    <property type="project" value="UniProtKB-SubCell"/>
</dbReference>
<dbReference type="GO" id="GO:0005524">
    <property type="term" value="F:ATP binding"/>
    <property type="evidence" value="ECO:0007669"/>
    <property type="project" value="UniProtKB-UniRule"/>
</dbReference>
<dbReference type="GO" id="GO:0140662">
    <property type="term" value="F:ATP-dependent protein folding chaperone"/>
    <property type="evidence" value="ECO:0007669"/>
    <property type="project" value="InterPro"/>
</dbReference>
<dbReference type="GO" id="GO:0016853">
    <property type="term" value="F:isomerase activity"/>
    <property type="evidence" value="ECO:0007669"/>
    <property type="project" value="UniProtKB-KW"/>
</dbReference>
<dbReference type="GO" id="GO:0051082">
    <property type="term" value="F:unfolded protein binding"/>
    <property type="evidence" value="ECO:0007669"/>
    <property type="project" value="UniProtKB-UniRule"/>
</dbReference>
<dbReference type="GO" id="GO:0042026">
    <property type="term" value="P:protein refolding"/>
    <property type="evidence" value="ECO:0007669"/>
    <property type="project" value="UniProtKB-UniRule"/>
</dbReference>
<dbReference type="CDD" id="cd03344">
    <property type="entry name" value="GroEL"/>
    <property type="match status" value="1"/>
</dbReference>
<dbReference type="FunFam" id="3.50.7.10:FF:000001">
    <property type="entry name" value="60 kDa chaperonin"/>
    <property type="match status" value="1"/>
</dbReference>
<dbReference type="Gene3D" id="3.50.7.10">
    <property type="entry name" value="GroEL"/>
    <property type="match status" value="1"/>
</dbReference>
<dbReference type="Gene3D" id="1.10.560.10">
    <property type="entry name" value="GroEL-like equatorial domain"/>
    <property type="match status" value="1"/>
</dbReference>
<dbReference type="Gene3D" id="3.30.260.10">
    <property type="entry name" value="TCP-1-like chaperonin intermediate domain"/>
    <property type="match status" value="1"/>
</dbReference>
<dbReference type="HAMAP" id="MF_00600">
    <property type="entry name" value="CH60"/>
    <property type="match status" value="1"/>
</dbReference>
<dbReference type="InterPro" id="IPR018370">
    <property type="entry name" value="Chaperonin_Cpn60_CS"/>
</dbReference>
<dbReference type="InterPro" id="IPR001844">
    <property type="entry name" value="Cpn60/GroEL"/>
</dbReference>
<dbReference type="InterPro" id="IPR002423">
    <property type="entry name" value="Cpn60/GroEL/TCP-1"/>
</dbReference>
<dbReference type="InterPro" id="IPR027409">
    <property type="entry name" value="GroEL-like_apical_dom_sf"/>
</dbReference>
<dbReference type="InterPro" id="IPR027413">
    <property type="entry name" value="GROEL-like_equatorial_sf"/>
</dbReference>
<dbReference type="InterPro" id="IPR027410">
    <property type="entry name" value="TCP-1-like_intermed_sf"/>
</dbReference>
<dbReference type="NCBIfam" id="TIGR02348">
    <property type="entry name" value="GroEL"/>
    <property type="match status" value="1"/>
</dbReference>
<dbReference type="NCBIfam" id="NF000592">
    <property type="entry name" value="PRK00013.1"/>
    <property type="match status" value="1"/>
</dbReference>
<dbReference type="NCBIfam" id="NF009487">
    <property type="entry name" value="PRK12849.1"/>
    <property type="match status" value="1"/>
</dbReference>
<dbReference type="NCBIfam" id="NF009488">
    <property type="entry name" value="PRK12850.1"/>
    <property type="match status" value="1"/>
</dbReference>
<dbReference type="NCBIfam" id="NF009489">
    <property type="entry name" value="PRK12851.1"/>
    <property type="match status" value="1"/>
</dbReference>
<dbReference type="PANTHER" id="PTHR45633">
    <property type="entry name" value="60 KDA HEAT SHOCK PROTEIN, MITOCHONDRIAL"/>
    <property type="match status" value="1"/>
</dbReference>
<dbReference type="Pfam" id="PF00118">
    <property type="entry name" value="Cpn60_TCP1"/>
    <property type="match status" value="1"/>
</dbReference>
<dbReference type="PRINTS" id="PR00298">
    <property type="entry name" value="CHAPERONIN60"/>
</dbReference>
<dbReference type="SUPFAM" id="SSF52029">
    <property type="entry name" value="GroEL apical domain-like"/>
    <property type="match status" value="1"/>
</dbReference>
<dbReference type="SUPFAM" id="SSF48592">
    <property type="entry name" value="GroEL equatorial domain-like"/>
    <property type="match status" value="2"/>
</dbReference>
<dbReference type="PROSITE" id="PS00296">
    <property type="entry name" value="CHAPERONINS_CPN60"/>
    <property type="match status" value="1"/>
</dbReference>
<evidence type="ECO:0000255" key="1">
    <source>
        <dbReference type="HAMAP-Rule" id="MF_00600"/>
    </source>
</evidence>
<evidence type="ECO:0000256" key="2">
    <source>
        <dbReference type="SAM" id="MobiDB-lite"/>
    </source>
</evidence>
<accession>Q3M1B1</accession>
<sequence length="545" mass="58694">MVKTILYKDTARWTLEKGFDALTEAVAVTLGPKGRNIVLEKKFGAPQIVNDGVTIAKEIELEDPAENTGISLLRQAASKTNDVAGDGTTTAIVLAHAMLKEGLRNVTAGADPLTVKRGIDKATEFVIEKIQEHARPIKDSRDIEQVATISAGNDPEVGRIVAEAMERVGKEGVISLEEGRSTTTELEVTEGMRFDRGYVSPYFVTDPERMEAVLEEPHILITDRKITMVQDLVPILEQIARTGKPLLIIADDIEKEALATLVVNHLRGVLRVAAVKAPGFGAQRKAVLEDIAALTGGQVISEDTGLKLENVRLEMLGKARRAIVTKDDTTIVAEGNEEAVKARIEQIRRQIQEVESSYDKEKLQQRLAKLAGGVAVIKVGAATETELKDRKLRLEDAINATKAAVEEGIVPGGGTTIAHIAPQLEEWAKSQMKDEELTGTMIVARALYAPLRRIADNAGANGAVIVERVRELPFDEGYDAVANKFVNMFEAGIVDPAKVTRSALQNAASIGGMVLTTEGVVVEKPDKQAKAPAGVGPGPGEGFDY</sequence>
<proteinExistence type="inferred from homology"/>
<protein>
    <recommendedName>
        <fullName evidence="1">Chaperonin GroEL 3</fullName>
        <ecNumber evidence="1">5.6.1.7</ecNumber>
    </recommendedName>
    <alternativeName>
        <fullName evidence="1">60 kDa chaperonin 3</fullName>
    </alternativeName>
    <alternativeName>
        <fullName evidence="1">Chaperonin-60 3</fullName>
        <shortName evidence="1">Cpn60 3</shortName>
    </alternativeName>
</protein>
<gene>
    <name evidence="1" type="primary">groEL3</name>
    <name evidence="1" type="synonym">groL3</name>
    <name type="ordered locus">Ava_C0144</name>
</gene>
<keyword id="KW-0067">ATP-binding</keyword>
<keyword id="KW-0143">Chaperone</keyword>
<keyword id="KW-0963">Cytoplasm</keyword>
<keyword id="KW-0413">Isomerase</keyword>
<keyword id="KW-0547">Nucleotide-binding</keyword>
<keyword id="KW-0614">Plasmid</keyword>
<organism>
    <name type="scientific">Trichormus variabilis (strain ATCC 29413 / PCC 7937)</name>
    <name type="common">Anabaena variabilis</name>
    <dbReference type="NCBI Taxonomy" id="240292"/>
    <lineage>
        <taxon>Bacteria</taxon>
        <taxon>Bacillati</taxon>
        <taxon>Cyanobacteriota</taxon>
        <taxon>Cyanophyceae</taxon>
        <taxon>Nostocales</taxon>
        <taxon>Nostocaceae</taxon>
        <taxon>Trichormus</taxon>
    </lineage>
</organism>
<feature type="chain" id="PRO_0000331963" description="Chaperonin GroEL 3">
    <location>
        <begin position="1"/>
        <end position="545"/>
    </location>
</feature>
<feature type="region of interest" description="Disordered" evidence="2">
    <location>
        <begin position="526"/>
        <end position="545"/>
    </location>
</feature>
<feature type="compositionally biased region" description="Gly residues" evidence="2">
    <location>
        <begin position="535"/>
        <end position="545"/>
    </location>
</feature>
<feature type="binding site" evidence="1">
    <location>
        <begin position="29"/>
        <end position="32"/>
    </location>
    <ligand>
        <name>ATP</name>
        <dbReference type="ChEBI" id="CHEBI:30616"/>
    </ligand>
</feature>
<feature type="binding site" evidence="1">
    <location>
        <begin position="86"/>
        <end position="90"/>
    </location>
    <ligand>
        <name>ATP</name>
        <dbReference type="ChEBI" id="CHEBI:30616"/>
    </ligand>
</feature>
<feature type="binding site" evidence="1">
    <location>
        <position position="413"/>
    </location>
    <ligand>
        <name>ATP</name>
        <dbReference type="ChEBI" id="CHEBI:30616"/>
    </ligand>
</feature>
<feature type="binding site" evidence="1">
    <location>
        <begin position="479"/>
        <end position="481"/>
    </location>
    <ligand>
        <name>ATP</name>
        <dbReference type="ChEBI" id="CHEBI:30616"/>
    </ligand>
</feature>
<feature type="binding site" evidence="1">
    <location>
        <position position="495"/>
    </location>
    <ligand>
        <name>ATP</name>
        <dbReference type="ChEBI" id="CHEBI:30616"/>
    </ligand>
</feature>
<name>CH603_TRIV2</name>
<geneLocation type="plasmid">
    <name>pAnaC</name>
</geneLocation>
<reference key="1">
    <citation type="journal article" date="2014" name="Stand. Genomic Sci.">
        <title>Complete genome sequence of Anabaena variabilis ATCC 29413.</title>
        <authorList>
            <person name="Thiel T."/>
            <person name="Pratte B.S."/>
            <person name="Zhong J."/>
            <person name="Goodwin L."/>
            <person name="Copeland A."/>
            <person name="Lucas S."/>
            <person name="Han C."/>
            <person name="Pitluck S."/>
            <person name="Land M.L."/>
            <person name="Kyrpides N.C."/>
            <person name="Woyke T."/>
        </authorList>
    </citation>
    <scope>NUCLEOTIDE SEQUENCE [LARGE SCALE GENOMIC DNA]</scope>
    <source>
        <strain>ATCC 29413 / PCC 7937</strain>
    </source>
</reference>